<evidence type="ECO:0000255" key="1"/>
<evidence type="ECO:0000255" key="2">
    <source>
        <dbReference type="PROSITE-ProRule" id="PRU00041"/>
    </source>
</evidence>
<evidence type="ECO:0000256" key="3">
    <source>
        <dbReference type="SAM" id="MobiDB-lite"/>
    </source>
</evidence>
<evidence type="ECO:0000269" key="4">
    <source>
    </source>
</evidence>
<evidence type="ECO:0000303" key="5">
    <source>
    </source>
</evidence>
<evidence type="ECO:0000305" key="6"/>
<evidence type="ECO:0000312" key="7">
    <source>
        <dbReference type="Araport" id="AT4G20080"/>
    </source>
</evidence>
<evidence type="ECO:0000312" key="8">
    <source>
        <dbReference type="EMBL" id="CAA16616.1"/>
    </source>
</evidence>
<dbReference type="EMBL" id="AL021637">
    <property type="protein sequence ID" value="CAA16616.1"/>
    <property type="molecule type" value="Genomic_DNA"/>
</dbReference>
<dbReference type="EMBL" id="AL161552">
    <property type="protein sequence ID" value="CAB79008.1"/>
    <property type="molecule type" value="Genomic_DNA"/>
</dbReference>
<dbReference type="EMBL" id="CP002687">
    <property type="protein sequence ID" value="AEE84270.1"/>
    <property type="molecule type" value="Genomic_DNA"/>
</dbReference>
<dbReference type="PIR" id="T04892">
    <property type="entry name" value="T04892"/>
</dbReference>
<dbReference type="RefSeq" id="NP_193741.1">
    <property type="nucleotide sequence ID" value="NM_118127.1"/>
</dbReference>
<dbReference type="SMR" id="O49435"/>
<dbReference type="FunCoup" id="O49435">
    <property type="interactions" value="203"/>
</dbReference>
<dbReference type="STRING" id="3702.O49435"/>
<dbReference type="PaxDb" id="3702-AT4G20080.1"/>
<dbReference type="ProteomicsDB" id="178911"/>
<dbReference type="EnsemblPlants" id="AT4G20080.1">
    <property type="protein sequence ID" value="AT4G20080.1"/>
    <property type="gene ID" value="AT4G20080"/>
</dbReference>
<dbReference type="GeneID" id="827753"/>
<dbReference type="Gramene" id="AT4G20080.1">
    <property type="protein sequence ID" value="AT4G20080.1"/>
    <property type="gene ID" value="AT4G20080"/>
</dbReference>
<dbReference type="KEGG" id="ath:AT4G20080"/>
<dbReference type="Araport" id="AT4G20080"/>
<dbReference type="TAIR" id="AT4G20080">
    <property type="gene designation" value="MCTP11"/>
</dbReference>
<dbReference type="eggNOG" id="ENOG502R77N">
    <property type="taxonomic scope" value="Eukaryota"/>
</dbReference>
<dbReference type="HOGENOM" id="CLU_003762_1_0_1"/>
<dbReference type="InParanoid" id="O49435"/>
<dbReference type="OMA" id="KANCERV"/>
<dbReference type="PRO" id="PR:O49435"/>
<dbReference type="Proteomes" id="UP000006548">
    <property type="component" value="Chromosome 4"/>
</dbReference>
<dbReference type="ExpressionAtlas" id="O49435">
    <property type="expression patterns" value="baseline and differential"/>
</dbReference>
<dbReference type="GO" id="GO:0005789">
    <property type="term" value="C:endoplasmic reticulum membrane"/>
    <property type="evidence" value="ECO:0007669"/>
    <property type="project" value="UniProtKB-SubCell"/>
</dbReference>
<dbReference type="GO" id="GO:0046872">
    <property type="term" value="F:metal ion binding"/>
    <property type="evidence" value="ECO:0007669"/>
    <property type="project" value="UniProtKB-KW"/>
</dbReference>
<dbReference type="CDD" id="cd08378">
    <property type="entry name" value="C2B_MCTP_PRT_plant"/>
    <property type="match status" value="1"/>
</dbReference>
<dbReference type="CDD" id="cd04019">
    <property type="entry name" value="C2C_MCTP_PRT_plant"/>
    <property type="match status" value="1"/>
</dbReference>
<dbReference type="CDD" id="cd08379">
    <property type="entry name" value="C2D_MCTP_PRT_plant"/>
    <property type="match status" value="1"/>
</dbReference>
<dbReference type="FunFam" id="2.60.40.150:FF:000090">
    <property type="entry name" value="C2 domain-containing protein"/>
    <property type="match status" value="1"/>
</dbReference>
<dbReference type="Gene3D" id="2.60.40.150">
    <property type="entry name" value="C2 domain"/>
    <property type="match status" value="3"/>
</dbReference>
<dbReference type="InterPro" id="IPR000008">
    <property type="entry name" value="C2_dom"/>
</dbReference>
<dbReference type="InterPro" id="IPR035892">
    <property type="entry name" value="C2_domain_sf"/>
</dbReference>
<dbReference type="InterPro" id="IPR047257">
    <property type="entry name" value="C2B_MCTP_PRT_plant"/>
</dbReference>
<dbReference type="InterPro" id="IPR047258">
    <property type="entry name" value="C2C_MCTP_PRT_plant"/>
</dbReference>
<dbReference type="InterPro" id="IPR047255">
    <property type="entry name" value="C2D_MCTP_PRT_plant"/>
</dbReference>
<dbReference type="InterPro" id="IPR013583">
    <property type="entry name" value="MCTP_C"/>
</dbReference>
<dbReference type="InterPro" id="IPR047259">
    <property type="entry name" value="QUIRKY-like"/>
</dbReference>
<dbReference type="PANTHER" id="PTHR31425:SF34">
    <property type="entry name" value="C2 DOMAIN-CONTAINING PROTEIN-RELATED"/>
    <property type="match status" value="1"/>
</dbReference>
<dbReference type="PANTHER" id="PTHR31425">
    <property type="entry name" value="PHOSPHORIBOSYLANTHRANILATE TRANSFERASE ISOFORM 1"/>
    <property type="match status" value="1"/>
</dbReference>
<dbReference type="Pfam" id="PF00168">
    <property type="entry name" value="C2"/>
    <property type="match status" value="3"/>
</dbReference>
<dbReference type="Pfam" id="PF08372">
    <property type="entry name" value="PRT_C"/>
    <property type="match status" value="1"/>
</dbReference>
<dbReference type="SMART" id="SM00239">
    <property type="entry name" value="C2"/>
    <property type="match status" value="3"/>
</dbReference>
<dbReference type="SUPFAM" id="SSF49562">
    <property type="entry name" value="C2 domain (Calcium/lipid-binding domain, CaLB)"/>
    <property type="match status" value="3"/>
</dbReference>
<dbReference type="PROSITE" id="PS50004">
    <property type="entry name" value="C2"/>
    <property type="match status" value="3"/>
</dbReference>
<organism>
    <name type="scientific">Arabidopsis thaliana</name>
    <name type="common">Mouse-ear cress</name>
    <dbReference type="NCBI Taxonomy" id="3702"/>
    <lineage>
        <taxon>Eukaryota</taxon>
        <taxon>Viridiplantae</taxon>
        <taxon>Streptophyta</taxon>
        <taxon>Embryophyta</taxon>
        <taxon>Tracheophyta</taxon>
        <taxon>Spermatophyta</taxon>
        <taxon>Magnoliopsida</taxon>
        <taxon>eudicotyledons</taxon>
        <taxon>Gunneridae</taxon>
        <taxon>Pentapetalae</taxon>
        <taxon>rosids</taxon>
        <taxon>malvids</taxon>
        <taxon>Brassicales</taxon>
        <taxon>Brassicaceae</taxon>
        <taxon>Camelineae</taxon>
        <taxon>Arabidopsis</taxon>
    </lineage>
</organism>
<name>MCT11_ARATH</name>
<protein>
    <recommendedName>
        <fullName evidence="5">Multiple C2 domain and transmembrane region protein 11</fullName>
    </recommendedName>
</protein>
<reference key="1">
    <citation type="journal article" date="1999" name="Nature">
        <title>Sequence and analysis of chromosome 4 of the plant Arabidopsis thaliana.</title>
        <authorList>
            <person name="Mayer K.F.X."/>
            <person name="Schueller C."/>
            <person name="Wambutt R."/>
            <person name="Murphy G."/>
            <person name="Volckaert G."/>
            <person name="Pohl T."/>
            <person name="Duesterhoeft A."/>
            <person name="Stiekema W."/>
            <person name="Entian K.-D."/>
            <person name="Terryn N."/>
            <person name="Harris B."/>
            <person name="Ansorge W."/>
            <person name="Brandt P."/>
            <person name="Grivell L.A."/>
            <person name="Rieger M."/>
            <person name="Weichselgartner M."/>
            <person name="de Simone V."/>
            <person name="Obermaier B."/>
            <person name="Mache R."/>
            <person name="Mueller M."/>
            <person name="Kreis M."/>
            <person name="Delseny M."/>
            <person name="Puigdomenech P."/>
            <person name="Watson M."/>
            <person name="Schmidtheini T."/>
            <person name="Reichert B."/>
            <person name="Portetelle D."/>
            <person name="Perez-Alonso M."/>
            <person name="Boutry M."/>
            <person name="Bancroft I."/>
            <person name="Vos P."/>
            <person name="Hoheisel J."/>
            <person name="Zimmermann W."/>
            <person name="Wedler H."/>
            <person name="Ridley P."/>
            <person name="Langham S.-A."/>
            <person name="McCullagh B."/>
            <person name="Bilham L."/>
            <person name="Robben J."/>
            <person name="van der Schueren J."/>
            <person name="Grymonprez B."/>
            <person name="Chuang Y.-J."/>
            <person name="Vandenbussche F."/>
            <person name="Braeken M."/>
            <person name="Weltjens I."/>
            <person name="Voet M."/>
            <person name="Bastiaens I."/>
            <person name="Aert R."/>
            <person name="Defoor E."/>
            <person name="Weitzenegger T."/>
            <person name="Bothe G."/>
            <person name="Ramsperger U."/>
            <person name="Hilbert H."/>
            <person name="Braun M."/>
            <person name="Holzer E."/>
            <person name="Brandt A."/>
            <person name="Peters S."/>
            <person name="van Staveren M."/>
            <person name="Dirkse W."/>
            <person name="Mooijman P."/>
            <person name="Klein Lankhorst R."/>
            <person name="Rose M."/>
            <person name="Hauf J."/>
            <person name="Koetter P."/>
            <person name="Berneiser S."/>
            <person name="Hempel S."/>
            <person name="Feldpausch M."/>
            <person name="Lamberth S."/>
            <person name="Van den Daele H."/>
            <person name="De Keyser A."/>
            <person name="Buysshaert C."/>
            <person name="Gielen J."/>
            <person name="Villarroel R."/>
            <person name="De Clercq R."/>
            <person name="van Montagu M."/>
            <person name="Rogers J."/>
            <person name="Cronin A."/>
            <person name="Quail M.A."/>
            <person name="Bray-Allen S."/>
            <person name="Clark L."/>
            <person name="Doggett J."/>
            <person name="Hall S."/>
            <person name="Kay M."/>
            <person name="Lennard N."/>
            <person name="McLay K."/>
            <person name="Mayes R."/>
            <person name="Pettett A."/>
            <person name="Rajandream M.A."/>
            <person name="Lyne M."/>
            <person name="Benes V."/>
            <person name="Rechmann S."/>
            <person name="Borkova D."/>
            <person name="Bloecker H."/>
            <person name="Scharfe M."/>
            <person name="Grimm M."/>
            <person name="Loehnert T.-H."/>
            <person name="Dose S."/>
            <person name="de Haan M."/>
            <person name="Maarse A.C."/>
            <person name="Schaefer M."/>
            <person name="Mueller-Auer S."/>
            <person name="Gabel C."/>
            <person name="Fuchs M."/>
            <person name="Fartmann B."/>
            <person name="Granderath K."/>
            <person name="Dauner D."/>
            <person name="Herzl A."/>
            <person name="Neumann S."/>
            <person name="Argiriou A."/>
            <person name="Vitale D."/>
            <person name="Liguori R."/>
            <person name="Piravandi E."/>
            <person name="Massenet O."/>
            <person name="Quigley F."/>
            <person name="Clabauld G."/>
            <person name="Muendlein A."/>
            <person name="Felber R."/>
            <person name="Schnabl S."/>
            <person name="Hiller R."/>
            <person name="Schmidt W."/>
            <person name="Lecharny A."/>
            <person name="Aubourg S."/>
            <person name="Chefdor F."/>
            <person name="Cooke R."/>
            <person name="Berger C."/>
            <person name="Monfort A."/>
            <person name="Casacuberta E."/>
            <person name="Gibbons T."/>
            <person name="Weber N."/>
            <person name="Vandenbol M."/>
            <person name="Bargues M."/>
            <person name="Terol J."/>
            <person name="Torres A."/>
            <person name="Perez-Perez A."/>
            <person name="Purnelle B."/>
            <person name="Bent E."/>
            <person name="Johnson S."/>
            <person name="Tacon D."/>
            <person name="Jesse T."/>
            <person name="Heijnen L."/>
            <person name="Schwarz S."/>
            <person name="Scholler P."/>
            <person name="Heber S."/>
            <person name="Francs P."/>
            <person name="Bielke C."/>
            <person name="Frishman D."/>
            <person name="Haase D."/>
            <person name="Lemcke K."/>
            <person name="Mewes H.-W."/>
            <person name="Stocker S."/>
            <person name="Zaccaria P."/>
            <person name="Bevan M."/>
            <person name="Wilson R.K."/>
            <person name="de la Bastide M."/>
            <person name="Habermann K."/>
            <person name="Parnell L."/>
            <person name="Dedhia N."/>
            <person name="Gnoj L."/>
            <person name="Schutz K."/>
            <person name="Huang E."/>
            <person name="Spiegel L."/>
            <person name="Sekhon M."/>
            <person name="Murray J."/>
            <person name="Sheet P."/>
            <person name="Cordes M."/>
            <person name="Abu-Threideh J."/>
            <person name="Stoneking T."/>
            <person name="Kalicki J."/>
            <person name="Graves T."/>
            <person name="Harmon G."/>
            <person name="Edwards J."/>
            <person name="Latreille P."/>
            <person name="Courtney L."/>
            <person name="Cloud J."/>
            <person name="Abbott A."/>
            <person name="Scott K."/>
            <person name="Johnson D."/>
            <person name="Minx P."/>
            <person name="Bentley D."/>
            <person name="Fulton B."/>
            <person name="Miller N."/>
            <person name="Greco T."/>
            <person name="Kemp K."/>
            <person name="Kramer J."/>
            <person name="Fulton L."/>
            <person name="Mardis E."/>
            <person name="Dante M."/>
            <person name="Pepin K."/>
            <person name="Hillier L.W."/>
            <person name="Nelson J."/>
            <person name="Spieth J."/>
            <person name="Ryan E."/>
            <person name="Andrews S."/>
            <person name="Geisel C."/>
            <person name="Layman D."/>
            <person name="Du H."/>
            <person name="Ali J."/>
            <person name="Berghoff A."/>
            <person name="Jones K."/>
            <person name="Drone K."/>
            <person name="Cotton M."/>
            <person name="Joshu C."/>
            <person name="Antonoiu B."/>
            <person name="Zidanic M."/>
            <person name="Strong C."/>
            <person name="Sun H."/>
            <person name="Lamar B."/>
            <person name="Yordan C."/>
            <person name="Ma P."/>
            <person name="Zhong J."/>
            <person name="Preston R."/>
            <person name="Vil D."/>
            <person name="Shekher M."/>
            <person name="Matero A."/>
            <person name="Shah R."/>
            <person name="Swaby I.K."/>
            <person name="O'Shaughnessy A."/>
            <person name="Rodriguez M."/>
            <person name="Hoffman J."/>
            <person name="Till S."/>
            <person name="Granat S."/>
            <person name="Shohdy N."/>
            <person name="Hasegawa A."/>
            <person name="Hameed A."/>
            <person name="Lodhi M."/>
            <person name="Johnson A."/>
            <person name="Chen E."/>
            <person name="Marra M.A."/>
            <person name="Martienssen R."/>
            <person name="McCombie W.R."/>
        </authorList>
    </citation>
    <scope>NUCLEOTIDE SEQUENCE [LARGE SCALE GENOMIC DNA]</scope>
    <source>
        <strain>cv. Columbia</strain>
    </source>
</reference>
<reference key="2">
    <citation type="journal article" date="2017" name="Plant J.">
        <title>Araport11: a complete reannotation of the Arabidopsis thaliana reference genome.</title>
        <authorList>
            <person name="Cheng C.Y."/>
            <person name="Krishnakumar V."/>
            <person name="Chan A.P."/>
            <person name="Thibaud-Nissen F."/>
            <person name="Schobel S."/>
            <person name="Town C.D."/>
        </authorList>
    </citation>
    <scope>GENOME REANNOTATION</scope>
    <source>
        <strain>cv. Columbia</strain>
    </source>
</reference>
<reference key="3">
    <citation type="journal article" date="2018" name="Plant Physiol.">
        <title>Characterization of multiple C2 domain and transmembrane region proteins in Arabidopsis.</title>
        <authorList>
            <person name="Liu L."/>
            <person name="Li C."/>
            <person name="Liang Z."/>
            <person name="Yu H."/>
        </authorList>
    </citation>
    <scope>TISSUE SPECIFICITY</scope>
    <scope>DEVELOPMENTAL STAGE</scope>
    <scope>SUBCELLULAR LOCATION</scope>
    <scope>GENE FAMILY</scope>
    <scope>NOMENCLATURE</scope>
    <source>
        <strain>cv. Columbia</strain>
    </source>
</reference>
<accession>O49435</accession>
<feature type="chain" id="PRO_0000457905" description="Multiple C2 domain and transmembrane region protein 11">
    <location>
        <begin position="1"/>
        <end position="774"/>
    </location>
</feature>
<feature type="transmembrane region" description="Helical" evidence="1">
    <location>
        <begin position="608"/>
        <end position="628"/>
    </location>
</feature>
<feature type="transmembrane region" description="Helical" evidence="1">
    <location>
        <begin position="722"/>
        <end position="742"/>
    </location>
</feature>
<feature type="domain" description="C2 1" evidence="2">
    <location>
        <begin position="9"/>
        <end position="145"/>
    </location>
</feature>
<feature type="domain" description="C2 2" evidence="2">
    <location>
        <begin position="184"/>
        <end position="307"/>
    </location>
</feature>
<feature type="domain" description="C2 3" evidence="2">
    <location>
        <begin position="338"/>
        <end position="471"/>
    </location>
</feature>
<feature type="region of interest" description="Disordered" evidence="3">
    <location>
        <begin position="1"/>
        <end position="30"/>
    </location>
</feature>
<feature type="compositionally biased region" description="Gly residues" evidence="3">
    <location>
        <begin position="1"/>
        <end position="12"/>
    </location>
</feature>
<feature type="binding site" evidence="2">
    <location>
        <position position="62"/>
    </location>
    <ligand>
        <name>Ca(2+)</name>
        <dbReference type="ChEBI" id="CHEBI:29108"/>
        <label>1</label>
    </ligand>
</feature>
<feature type="binding site" evidence="2">
    <location>
        <position position="110"/>
    </location>
    <ligand>
        <name>Ca(2+)</name>
        <dbReference type="ChEBI" id="CHEBI:29108"/>
        <label>1</label>
    </ligand>
</feature>
<feature type="binding site" evidence="2">
    <location>
        <position position="110"/>
    </location>
    <ligand>
        <name>Ca(2+)</name>
        <dbReference type="ChEBI" id="CHEBI:29108"/>
        <label>2</label>
    </ligand>
</feature>
<feature type="binding site" evidence="2">
    <location>
        <position position="112"/>
    </location>
    <ligand>
        <name>Ca(2+)</name>
        <dbReference type="ChEBI" id="CHEBI:29108"/>
        <label>1</label>
    </ligand>
</feature>
<feature type="binding site" evidence="2">
    <location>
        <position position="112"/>
    </location>
    <ligand>
        <name>Ca(2+)</name>
        <dbReference type="ChEBI" id="CHEBI:29108"/>
        <label>2</label>
    </ligand>
</feature>
<feature type="binding site" evidence="2">
    <location>
        <position position="118"/>
    </location>
    <ligand>
        <name>Ca(2+)</name>
        <dbReference type="ChEBI" id="CHEBI:29108"/>
        <label>2</label>
    </ligand>
</feature>
<gene>
    <name evidence="5" type="primary">MCTP11</name>
    <name evidence="7" type="ordered locus">At4g20080</name>
    <name evidence="8" type="ORF">F18F4.180</name>
</gene>
<comment type="function">
    <text evidence="5">May function as a signaling molecule by regulating the trafficking of other regulators.</text>
</comment>
<comment type="cofactor">
    <cofactor evidence="2">
        <name>Ca(2+)</name>
        <dbReference type="ChEBI" id="CHEBI:29108"/>
    </cofactor>
</comment>
<comment type="subcellular location">
    <subcellularLocation>
        <location evidence="4">Endoplasmic reticulum membrane</location>
        <topology evidence="1">Multi-pass membrane protein</topology>
    </subcellularLocation>
</comment>
<comment type="tissue specificity">
    <text evidence="4">Observed in flowers.</text>
</comment>
<comment type="developmental stage">
    <text evidence="4">In developing flowers, fades out gradually in pollen grains, but accumulates progressively in ovules.</text>
</comment>
<comment type="similarity">
    <text evidence="6">Belongs to the MCTP family.</text>
</comment>
<sequence>MAVNGTGNGTGDGDFSLKETSPNIGNGGVNGGEKLTSSFDLVEAMHFLYARIVRARALPVNDSFVAVKIGSYKGRTKQILNSNPNPEFHETFAFTKTRLQGDILEVVVRNRDNPNEDDIVGKCKFDVAEIPTRVPPDSPLAPQWYRLEDRNGVKIGGEIMVSVWIGTQADEVFSEAWHSDSASVTGENVVNTRSKVYLSPRLWYLRVNVIEAQDLVLLHPNRINPEILIKGFLGNVVVRSRISQTKSVSPVWNEDMMFVAVEPFDDSLILSVEDKVGPREECLGRCEIKLSQVERRVLPGPVPSLWYNVEHIGETGEGRRFAGRIHLRVSLDGGYHVLDESIQYSSDYRASAKLLWTPPIGVLELGVLNATGLMPMKSRGGRGTTDAYCVAKYGTKWVRTRTIVDTFDPKWNEQYTWEVYDPYTVITIGVFDNLKLFGAGNENRLINDSRIGKIRIRLSTLVTSKIYTHSYPLMVLKPDGVKKMGEIQLAVRFTATSMMDMLQKYTEPLLPEMHYISPLSIYQLDSLRHQATHILCINLGRNEPALGRDVVEYMLDVGSNIWSLRRGRANFERLVSFFDGWIDAWKWFDEICKWKSPVTSVLVHIVCLFVVFLPKYCVFSMLLYCFVFGLYRFGLRPRHPPHMDIKLSKADSALPDELDEEFDVFPSSKSGDVLKRRYDRLRGIAGRMMIVLGDLATQGERVKSLLSWRDPRATSLFLTFCFVSCGVICFVSMKLLLTFLAFYVMRHPRVRVFDIPSIPQNFFRRLPSRADSIL</sequence>
<keyword id="KW-0106">Calcium</keyword>
<keyword id="KW-0256">Endoplasmic reticulum</keyword>
<keyword id="KW-0472">Membrane</keyword>
<keyword id="KW-0479">Metal-binding</keyword>
<keyword id="KW-1185">Reference proteome</keyword>
<keyword id="KW-0677">Repeat</keyword>
<keyword id="KW-0812">Transmembrane</keyword>
<keyword id="KW-1133">Transmembrane helix</keyword>
<proteinExistence type="evidence at transcript level"/>